<sequence>MAEHGESSEDRISEIDYEFLAELSARFGMNLVQLAKSQEEEDHKERMKMKKGFNSQMRSEAKRLKTFESYDTFRSWTPQEMAAAGFYHTGVKLGVQCFCCSLILFGNSLRKLPIERHKKLRPECEFLQGKDVGNIGKYDIRVKSPEKMLRGGKARYHEEEARLESFEDWPFYAHGTSPRVLSAAGFVFTGKRDTVQCFSCGGSLGNWEEGDDPWKEHAKWFPKCEFLQSKKSSEEIAQYIQGYEGFVHVTGEHFVKSWVRRELPMVSAYCNDSVFANEELRMDMFKDWPQESPVGVEALVRAGFFYTGKKDIVRCFSCGGCLEKWAEGDDPMEDHIKFFPECVFLQTLKSSAEVIPTLQSQYALPEATETTRESNHGDAAAVHSTVVDLGRSEAQWFQEARSLSEQLRDTYTKTSFCHMNLPEVCSSLGTDHLLSCDVSIISKHISQPVQGALTIPEVFSNLSSVMCVEGEAGSGKTTFLKRIAFLWASGCCPLLYRFQLVFYLSLSSITPDQGLDNIICTQLLGAGGCISEVCLSSSIQQLQHQVLFLLDDYSGLASLPQALHTLITKNYLFRTCLLIAVHTNRVRDIRPYLGTSLEIQEFPFYNTVFVLRKFFSHDIICVEKLIIYFSENKDLQGVYKTPLFVAAVCNDWNQNASAQDDFQDVTLFHSYMQYLSLKYKATAESLQATVSSCGQLALTGLFSSCFEFNSDDLAEAGVDEDVKLTTFLMSKFTAQRLRPVYRFLGPLFQEFLAAVRLTELLSSDRQEDQDLGLYYLRQIDSPLKAINSFNIFLYYVSSHSSSKAAPTVVSHLLQLVDEKESLENMSENEDYMKLHPQTFLWFQFVRGLWLVSPESFSSFVSEHLLRLALIFAYESNTVAECSPFILQFLRGRTLALRVLNLEYFWDHPESLLLLRSLKVSINGNKMSSYVDYSFKTYFENLQPPAINEEYTSAFEHVSEWRRNFAQDEEIIKNYENIWPRALPDISEGYWNLSPKPCKIPKLEVQVNNMGPADQALLQVLMEVFSASQSIEFHLFNSSGFLESIRPALELSKASVTKCSMSRLELSRAEQELLLTLPALQSLEVSETNQLPDQLFHNLHKFLGLKELCVRLDGKPDVLSVLPEEFLNLHHMEKLSIRTSTESDLSKLVKFIQNFPNLHVFHLKCDFLSNCESLMTALASCKKLREIEFSGQCFEAMTFVNILPNFVSLKILSLKGQQFADKETSEKFAQALGSLRNLEELLVPTGDGIHQVAKLIVRQCLQLPCLRVLAFHDILDDESVIEIGAATSGSFQKLENLDISMNHKITEEGYRNFFQALDNLPNLQMLNICRNIPGRIQVQATTVKALCHCVSRLPSLTRLGMLSWLLDEEDMKVINDVKERHPQSKRLTIFWKWIVPFSPVVLE</sequence>
<feature type="chain" id="PRO_0000122346" description="Baculoviral IAP repeat-containing protein 1g">
    <location>
        <begin position="1"/>
        <end position="1402"/>
    </location>
</feature>
<feature type="repeat" description="BIR 1">
    <location>
        <begin position="60"/>
        <end position="127"/>
    </location>
</feature>
<feature type="repeat" description="BIR 2">
    <location>
        <begin position="159"/>
        <end position="227"/>
    </location>
</feature>
<feature type="repeat" description="BIR 3">
    <location>
        <begin position="278"/>
        <end position="345"/>
    </location>
</feature>
<feature type="domain" description="NACHT" evidence="3">
    <location>
        <begin position="464"/>
        <end position="759"/>
    </location>
</feature>
<feature type="binding site" evidence="2">
    <location>
        <position position="315"/>
    </location>
    <ligand>
        <name>Zn(2+)</name>
        <dbReference type="ChEBI" id="CHEBI:29105"/>
    </ligand>
</feature>
<feature type="binding site" evidence="2">
    <location>
        <position position="318"/>
    </location>
    <ligand>
        <name>Zn(2+)</name>
        <dbReference type="ChEBI" id="CHEBI:29105"/>
    </ligand>
</feature>
<feature type="binding site" evidence="2">
    <location>
        <position position="335"/>
    </location>
    <ligand>
        <name>Zn(2+)</name>
        <dbReference type="ChEBI" id="CHEBI:29105"/>
    </ligand>
</feature>
<feature type="binding site" evidence="2">
    <location>
        <position position="342"/>
    </location>
    <ligand>
        <name>Zn(2+)</name>
        <dbReference type="ChEBI" id="CHEBI:29105"/>
    </ligand>
</feature>
<feature type="binding site" evidence="1">
    <location>
        <position position="476"/>
    </location>
    <ligand>
        <name>ATP</name>
        <dbReference type="ChEBI" id="CHEBI:30616"/>
    </ligand>
</feature>
<keyword id="KW-0053">Apoptosis</keyword>
<keyword id="KW-0067">ATP-binding</keyword>
<keyword id="KW-0479">Metal-binding</keyword>
<keyword id="KW-0547">Nucleotide-binding</keyword>
<keyword id="KW-1185">Reference proteome</keyword>
<keyword id="KW-0677">Repeat</keyword>
<keyword id="KW-0862">Zinc</keyword>
<gene>
    <name type="primary">Naip7</name>
    <name type="synonym">Birc1g</name>
</gene>
<organism>
    <name type="scientific">Mus musculus</name>
    <name type="common">Mouse</name>
    <dbReference type="NCBI Taxonomy" id="10090"/>
    <lineage>
        <taxon>Eukaryota</taxon>
        <taxon>Metazoa</taxon>
        <taxon>Chordata</taxon>
        <taxon>Craniata</taxon>
        <taxon>Vertebrata</taxon>
        <taxon>Euteleostomi</taxon>
        <taxon>Mammalia</taxon>
        <taxon>Eutheria</taxon>
        <taxon>Euarchontoglires</taxon>
        <taxon>Glires</taxon>
        <taxon>Rodentia</taxon>
        <taxon>Myomorpha</taxon>
        <taxon>Muroidea</taxon>
        <taxon>Muridae</taxon>
        <taxon>Murinae</taxon>
        <taxon>Mus</taxon>
        <taxon>Mus</taxon>
    </lineage>
</organism>
<proteinExistence type="predicted"/>
<accession>Q9JIB3</accession>
<dbReference type="EMBL" id="AF242433">
    <property type="protein sequence ID" value="AAF82749.1"/>
    <property type="molecule type" value="Genomic_DNA"/>
</dbReference>
<dbReference type="RefSeq" id="NP_067520.1">
    <property type="nucleotide sequence ID" value="NM_021545.1"/>
</dbReference>
<dbReference type="SMR" id="Q9JIB3"/>
<dbReference type="FunCoup" id="Q9JIB3">
    <property type="interactions" value="16"/>
</dbReference>
<dbReference type="MEROPS" id="I32.001"/>
<dbReference type="iPTMnet" id="Q9JIB3"/>
<dbReference type="PhosphoSitePlus" id="Q9JIB3"/>
<dbReference type="jPOST" id="Q9JIB3"/>
<dbReference type="ProteomicsDB" id="273491"/>
<dbReference type="DNASU" id="53880"/>
<dbReference type="GeneID" id="53880"/>
<dbReference type="KEGG" id="mmu:53880"/>
<dbReference type="UCSC" id="uc011zdt.1">
    <property type="organism name" value="mouse"/>
</dbReference>
<dbReference type="AGR" id="MGI:1858256"/>
<dbReference type="CTD" id="53880"/>
<dbReference type="MGI" id="MGI:1858256">
    <property type="gene designation" value="Naip7"/>
</dbReference>
<dbReference type="InParanoid" id="Q9JIB3"/>
<dbReference type="BioGRID-ORCS" id="53880">
    <property type="hits" value="1 hit in 17 CRISPR screens"/>
</dbReference>
<dbReference type="PRO" id="PR:Q9JIB3"/>
<dbReference type="Proteomes" id="UP000000589">
    <property type="component" value="Unplaced"/>
</dbReference>
<dbReference type="RNAct" id="Q9JIB3">
    <property type="molecule type" value="protein"/>
</dbReference>
<dbReference type="GO" id="GO:0005524">
    <property type="term" value="F:ATP binding"/>
    <property type="evidence" value="ECO:0000250"/>
    <property type="project" value="UniProtKB"/>
</dbReference>
<dbReference type="GO" id="GO:0043027">
    <property type="term" value="F:cysteine-type endopeptidase inhibitor activity involved in apoptotic process"/>
    <property type="evidence" value="ECO:0007669"/>
    <property type="project" value="InterPro"/>
</dbReference>
<dbReference type="GO" id="GO:0046872">
    <property type="term" value="F:metal ion binding"/>
    <property type="evidence" value="ECO:0007669"/>
    <property type="project" value="UniProtKB-KW"/>
</dbReference>
<dbReference type="GO" id="GO:0006915">
    <property type="term" value="P:apoptotic process"/>
    <property type="evidence" value="ECO:0007669"/>
    <property type="project" value="UniProtKB-KW"/>
</dbReference>
<dbReference type="GO" id="GO:0043066">
    <property type="term" value="P:negative regulation of apoptotic process"/>
    <property type="evidence" value="ECO:0007669"/>
    <property type="project" value="InterPro"/>
</dbReference>
<dbReference type="CDD" id="cd00022">
    <property type="entry name" value="BIR"/>
    <property type="match status" value="3"/>
</dbReference>
<dbReference type="FunFam" id="1.10.1170.10:FF:000007">
    <property type="entry name" value="Baculoviral IAP repeat-containing protein 1"/>
    <property type="match status" value="2"/>
</dbReference>
<dbReference type="FunFam" id="1.10.1170.10:FF:000013">
    <property type="entry name" value="Baculoviral IAP repeat-containing protein 1"/>
    <property type="match status" value="1"/>
</dbReference>
<dbReference type="FunFam" id="3.40.50.300:FF:001126">
    <property type="entry name" value="Baculoviral IAP repeat-containing protein 1"/>
    <property type="match status" value="1"/>
</dbReference>
<dbReference type="FunFam" id="3.80.10.10:FF:000316">
    <property type="entry name" value="Baculoviral IAP repeat-containing protein 1"/>
    <property type="match status" value="1"/>
</dbReference>
<dbReference type="Gene3D" id="1.10.1170.10">
    <property type="entry name" value="Inhibitor Of Apoptosis Protein (2mihbC-IAP-1), Chain A"/>
    <property type="match status" value="3"/>
</dbReference>
<dbReference type="Gene3D" id="3.40.50.300">
    <property type="entry name" value="P-loop containing nucleotide triphosphate hydrolases"/>
    <property type="match status" value="1"/>
</dbReference>
<dbReference type="Gene3D" id="3.80.10.10">
    <property type="entry name" value="Ribonuclease Inhibitor"/>
    <property type="match status" value="1"/>
</dbReference>
<dbReference type="InterPro" id="IPR001370">
    <property type="entry name" value="BIR_rpt"/>
</dbReference>
<dbReference type="InterPro" id="IPR032675">
    <property type="entry name" value="LRR_dom_sf"/>
</dbReference>
<dbReference type="InterPro" id="IPR007111">
    <property type="entry name" value="NACHT_NTPase"/>
</dbReference>
<dbReference type="InterPro" id="IPR028789">
    <property type="entry name" value="Naip"/>
</dbReference>
<dbReference type="InterPro" id="IPR053882">
    <property type="entry name" value="Nlrc4-like_WHD"/>
</dbReference>
<dbReference type="InterPro" id="IPR040535">
    <property type="entry name" value="NLRC4_HD"/>
</dbReference>
<dbReference type="InterPro" id="IPR027417">
    <property type="entry name" value="P-loop_NTPase"/>
</dbReference>
<dbReference type="PANTHER" id="PTHR46914">
    <property type="entry name" value="BACULOVIRAL IAP REPEAT-CONTAINING PROTEIN 1"/>
    <property type="match status" value="1"/>
</dbReference>
<dbReference type="PANTHER" id="PTHR46914:SF1">
    <property type="entry name" value="BACULOVIRAL IAP REPEAT-CONTAINING PROTEIN 1"/>
    <property type="match status" value="1"/>
</dbReference>
<dbReference type="Pfam" id="PF00653">
    <property type="entry name" value="BIR"/>
    <property type="match status" value="3"/>
</dbReference>
<dbReference type="Pfam" id="PF05729">
    <property type="entry name" value="NACHT"/>
    <property type="match status" value="1"/>
</dbReference>
<dbReference type="Pfam" id="PF22524">
    <property type="entry name" value="Nlrc4-like_WHD"/>
    <property type="match status" value="1"/>
</dbReference>
<dbReference type="Pfam" id="PF17889">
    <property type="entry name" value="NLRC4_HD"/>
    <property type="match status" value="1"/>
</dbReference>
<dbReference type="SMART" id="SM00238">
    <property type="entry name" value="BIR"/>
    <property type="match status" value="3"/>
</dbReference>
<dbReference type="SUPFAM" id="SSF57924">
    <property type="entry name" value="Inhibitor of apoptosis (IAP) repeat"/>
    <property type="match status" value="3"/>
</dbReference>
<dbReference type="SUPFAM" id="SSF52540">
    <property type="entry name" value="P-loop containing nucleoside triphosphate hydrolases"/>
    <property type="match status" value="1"/>
</dbReference>
<dbReference type="SUPFAM" id="SSF52047">
    <property type="entry name" value="RNI-like"/>
    <property type="match status" value="1"/>
</dbReference>
<dbReference type="PROSITE" id="PS01282">
    <property type="entry name" value="BIR_REPEAT_1"/>
    <property type="match status" value="2"/>
</dbReference>
<dbReference type="PROSITE" id="PS50143">
    <property type="entry name" value="BIR_REPEAT_2"/>
    <property type="match status" value="3"/>
</dbReference>
<dbReference type="PROSITE" id="PS50837">
    <property type="entry name" value="NACHT"/>
    <property type="match status" value="1"/>
</dbReference>
<comment type="function">
    <text>Prevents motor-neuron apoptosis induced by a variety of signals.</text>
</comment>
<reference key="1">
    <citation type="journal article" date="2000" name="Genome Res.">
        <title>Genomic sequence analysis of the mouse Naip gene array.</title>
        <authorList>
            <person name="Endrizzi M.G."/>
            <person name="Hadinoto V."/>
            <person name="Growney J.D."/>
            <person name="Miller W."/>
            <person name="Dietrich W.F."/>
        </authorList>
    </citation>
    <scope>NUCLEOTIDE SEQUENCE [GENOMIC DNA]</scope>
</reference>
<protein>
    <recommendedName>
        <fullName>Baculoviral IAP repeat-containing protein 1g</fullName>
    </recommendedName>
    <alternativeName>
        <fullName>Neuronal apoptosis inhibitory protein 7</fullName>
    </alternativeName>
</protein>
<name>BIR1G_MOUSE</name>
<evidence type="ECO:0000250" key="1"/>
<evidence type="ECO:0000255" key="2">
    <source>
        <dbReference type="PROSITE-ProRule" id="PRU00029"/>
    </source>
</evidence>
<evidence type="ECO:0000255" key="3">
    <source>
        <dbReference type="PROSITE-ProRule" id="PRU00136"/>
    </source>
</evidence>